<organism>
    <name type="scientific">Arabidopsis thaliana</name>
    <name type="common">Mouse-ear cress</name>
    <dbReference type="NCBI Taxonomy" id="3702"/>
    <lineage>
        <taxon>Eukaryota</taxon>
        <taxon>Viridiplantae</taxon>
        <taxon>Streptophyta</taxon>
        <taxon>Embryophyta</taxon>
        <taxon>Tracheophyta</taxon>
        <taxon>Spermatophyta</taxon>
        <taxon>Magnoliopsida</taxon>
        <taxon>eudicotyledons</taxon>
        <taxon>Gunneridae</taxon>
        <taxon>Pentapetalae</taxon>
        <taxon>rosids</taxon>
        <taxon>malvids</taxon>
        <taxon>Brassicales</taxon>
        <taxon>Brassicaceae</taxon>
        <taxon>Camelineae</taxon>
        <taxon>Arabidopsis</taxon>
    </lineage>
</organism>
<comment type="function">
    <text evidence="3">Disease resistance protein that cooperates with RPP2A to confer resistance to Hyaloperonospora parasitica isolate Cala2.</text>
</comment>
<comment type="catalytic activity">
    <reaction evidence="2">
        <text>NAD(+) + H2O = ADP-D-ribose + nicotinamide + H(+)</text>
        <dbReference type="Rhea" id="RHEA:16301"/>
        <dbReference type="ChEBI" id="CHEBI:15377"/>
        <dbReference type="ChEBI" id="CHEBI:15378"/>
        <dbReference type="ChEBI" id="CHEBI:17154"/>
        <dbReference type="ChEBI" id="CHEBI:57540"/>
        <dbReference type="ChEBI" id="CHEBI:57967"/>
        <dbReference type="EC" id="3.2.2.6"/>
    </reaction>
    <physiologicalReaction direction="left-to-right" evidence="2">
        <dbReference type="Rhea" id="RHEA:16302"/>
    </physiologicalReaction>
</comment>
<comment type="alternative products">
    <event type="alternative splicing"/>
    <isoform>
        <id>F4JT80-1</id>
        <name>1</name>
        <sequence type="displayed"/>
    </isoform>
    <isoform>
        <id>F4JT80-2</id>
        <name>2</name>
        <sequence type="described" ref="VSP_059609"/>
    </isoform>
</comment>
<comment type="domain">
    <text evidence="2">The TIR domain mediates NAD(+) hydrolase (NADase) activity. Self-association of TIR domains is required for NADase activity.</text>
</comment>
<comment type="similarity">
    <text evidence="5">Belongs to the disease resistance TIR-NB-LRR family.</text>
</comment>
<comment type="sequence caution" evidence="5">
    <conflict type="erroneous initiation">
        <sequence resource="EMBL-CDS" id="AEE84192"/>
    </conflict>
    <text>Extended N-terminus.</text>
</comment>
<comment type="sequence caution" evidence="5">
    <conflict type="erroneous termination">
        <sequence resource="EMBL" id="AK229040"/>
    </conflict>
    <text>Truncated C-terminus.</text>
</comment>
<comment type="sequence caution" evidence="5">
    <conflict type="erroneous initiation">
        <sequence resource="EMBL-CDS" id="ANM66560"/>
    </conflict>
    <text>Extended N-terminus.</text>
</comment>
<comment type="sequence caution" evidence="5">
    <conflict type="erroneous initiation">
        <sequence resource="EMBL-CDS" id="ANM66561"/>
    </conflict>
    <text>Extended N-terminus.</text>
</comment>
<comment type="sequence caution" evidence="5">
    <conflict type="erroneous initiation">
        <sequence resource="EMBL-CDS" id="ANM66562"/>
    </conflict>
    <text>Extended N-terminus.</text>
</comment>
<comment type="sequence caution" evidence="5">
    <conflict type="erroneous initiation">
        <sequence resource="EMBL-CDS" id="ANM66563"/>
    </conflict>
    <text>Extended N-terminus.</text>
</comment>
<comment type="sequence caution" evidence="5">
    <conflict type="erroneous gene model prediction">
        <sequence resource="EMBL-CDS" id="CAA16928"/>
    </conflict>
</comment>
<comment type="sequence caution" evidence="5">
    <conflict type="erroneous gene model prediction">
        <sequence resource="EMBL-CDS" id="CAB78953"/>
    </conflict>
</comment>
<comment type="online information" name="NIB-LRRS">
    <link uri="http://niblrrs.ucdavis.edu"/>
    <text>Functional and comparative genomics of disease resistance gene homologs</text>
</comment>
<proteinExistence type="evidence at protein level"/>
<keyword id="KW-0025">Alternative splicing</keyword>
<keyword id="KW-0067">ATP-binding</keyword>
<keyword id="KW-0378">Hydrolase</keyword>
<keyword id="KW-0433">Leucine-rich repeat</keyword>
<keyword id="KW-0520">NAD</keyword>
<keyword id="KW-0547">Nucleotide-binding</keyword>
<keyword id="KW-0611">Plant defense</keyword>
<keyword id="KW-1185">Reference proteome</keyword>
<keyword id="KW-0677">Repeat</keyword>
<protein>
    <recommendedName>
        <fullName evidence="5">Disease resistance protein RPP2B</fullName>
        <ecNumber evidence="2">3.2.2.6</ecNumber>
    </recommendedName>
</protein>
<reference key="1">
    <citation type="journal article" date="1999" name="Nature">
        <title>Sequence and analysis of chromosome 4 of the plant Arabidopsis thaliana.</title>
        <authorList>
            <person name="Mayer K.F.X."/>
            <person name="Schueller C."/>
            <person name="Wambutt R."/>
            <person name="Murphy G."/>
            <person name="Volckaert G."/>
            <person name="Pohl T."/>
            <person name="Duesterhoeft A."/>
            <person name="Stiekema W."/>
            <person name="Entian K.-D."/>
            <person name="Terryn N."/>
            <person name="Harris B."/>
            <person name="Ansorge W."/>
            <person name="Brandt P."/>
            <person name="Grivell L.A."/>
            <person name="Rieger M."/>
            <person name="Weichselgartner M."/>
            <person name="de Simone V."/>
            <person name="Obermaier B."/>
            <person name="Mache R."/>
            <person name="Mueller M."/>
            <person name="Kreis M."/>
            <person name="Delseny M."/>
            <person name="Puigdomenech P."/>
            <person name="Watson M."/>
            <person name="Schmidtheini T."/>
            <person name="Reichert B."/>
            <person name="Portetelle D."/>
            <person name="Perez-Alonso M."/>
            <person name="Boutry M."/>
            <person name="Bancroft I."/>
            <person name="Vos P."/>
            <person name="Hoheisel J."/>
            <person name="Zimmermann W."/>
            <person name="Wedler H."/>
            <person name="Ridley P."/>
            <person name="Langham S.-A."/>
            <person name="McCullagh B."/>
            <person name="Bilham L."/>
            <person name="Robben J."/>
            <person name="van der Schueren J."/>
            <person name="Grymonprez B."/>
            <person name="Chuang Y.-J."/>
            <person name="Vandenbussche F."/>
            <person name="Braeken M."/>
            <person name="Weltjens I."/>
            <person name="Voet M."/>
            <person name="Bastiaens I."/>
            <person name="Aert R."/>
            <person name="Defoor E."/>
            <person name="Weitzenegger T."/>
            <person name="Bothe G."/>
            <person name="Ramsperger U."/>
            <person name="Hilbert H."/>
            <person name="Braun M."/>
            <person name="Holzer E."/>
            <person name="Brandt A."/>
            <person name="Peters S."/>
            <person name="van Staveren M."/>
            <person name="Dirkse W."/>
            <person name="Mooijman P."/>
            <person name="Klein Lankhorst R."/>
            <person name="Rose M."/>
            <person name="Hauf J."/>
            <person name="Koetter P."/>
            <person name="Berneiser S."/>
            <person name="Hempel S."/>
            <person name="Feldpausch M."/>
            <person name="Lamberth S."/>
            <person name="Van den Daele H."/>
            <person name="De Keyser A."/>
            <person name="Buysshaert C."/>
            <person name="Gielen J."/>
            <person name="Villarroel R."/>
            <person name="De Clercq R."/>
            <person name="van Montagu M."/>
            <person name="Rogers J."/>
            <person name="Cronin A."/>
            <person name="Quail M.A."/>
            <person name="Bray-Allen S."/>
            <person name="Clark L."/>
            <person name="Doggett J."/>
            <person name="Hall S."/>
            <person name="Kay M."/>
            <person name="Lennard N."/>
            <person name="McLay K."/>
            <person name="Mayes R."/>
            <person name="Pettett A."/>
            <person name="Rajandream M.A."/>
            <person name="Lyne M."/>
            <person name="Benes V."/>
            <person name="Rechmann S."/>
            <person name="Borkova D."/>
            <person name="Bloecker H."/>
            <person name="Scharfe M."/>
            <person name="Grimm M."/>
            <person name="Loehnert T.-H."/>
            <person name="Dose S."/>
            <person name="de Haan M."/>
            <person name="Maarse A.C."/>
            <person name="Schaefer M."/>
            <person name="Mueller-Auer S."/>
            <person name="Gabel C."/>
            <person name="Fuchs M."/>
            <person name="Fartmann B."/>
            <person name="Granderath K."/>
            <person name="Dauner D."/>
            <person name="Herzl A."/>
            <person name="Neumann S."/>
            <person name="Argiriou A."/>
            <person name="Vitale D."/>
            <person name="Liguori R."/>
            <person name="Piravandi E."/>
            <person name="Massenet O."/>
            <person name="Quigley F."/>
            <person name="Clabauld G."/>
            <person name="Muendlein A."/>
            <person name="Felber R."/>
            <person name="Schnabl S."/>
            <person name="Hiller R."/>
            <person name="Schmidt W."/>
            <person name="Lecharny A."/>
            <person name="Aubourg S."/>
            <person name="Chefdor F."/>
            <person name="Cooke R."/>
            <person name="Berger C."/>
            <person name="Monfort A."/>
            <person name="Casacuberta E."/>
            <person name="Gibbons T."/>
            <person name="Weber N."/>
            <person name="Vandenbol M."/>
            <person name="Bargues M."/>
            <person name="Terol J."/>
            <person name="Torres A."/>
            <person name="Perez-Perez A."/>
            <person name="Purnelle B."/>
            <person name="Bent E."/>
            <person name="Johnson S."/>
            <person name="Tacon D."/>
            <person name="Jesse T."/>
            <person name="Heijnen L."/>
            <person name="Schwarz S."/>
            <person name="Scholler P."/>
            <person name="Heber S."/>
            <person name="Francs P."/>
            <person name="Bielke C."/>
            <person name="Frishman D."/>
            <person name="Haase D."/>
            <person name="Lemcke K."/>
            <person name="Mewes H.-W."/>
            <person name="Stocker S."/>
            <person name="Zaccaria P."/>
            <person name="Bevan M."/>
            <person name="Wilson R.K."/>
            <person name="de la Bastide M."/>
            <person name="Habermann K."/>
            <person name="Parnell L."/>
            <person name="Dedhia N."/>
            <person name="Gnoj L."/>
            <person name="Schutz K."/>
            <person name="Huang E."/>
            <person name="Spiegel L."/>
            <person name="Sekhon M."/>
            <person name="Murray J."/>
            <person name="Sheet P."/>
            <person name="Cordes M."/>
            <person name="Abu-Threideh J."/>
            <person name="Stoneking T."/>
            <person name="Kalicki J."/>
            <person name="Graves T."/>
            <person name="Harmon G."/>
            <person name="Edwards J."/>
            <person name="Latreille P."/>
            <person name="Courtney L."/>
            <person name="Cloud J."/>
            <person name="Abbott A."/>
            <person name="Scott K."/>
            <person name="Johnson D."/>
            <person name="Minx P."/>
            <person name="Bentley D."/>
            <person name="Fulton B."/>
            <person name="Miller N."/>
            <person name="Greco T."/>
            <person name="Kemp K."/>
            <person name="Kramer J."/>
            <person name="Fulton L."/>
            <person name="Mardis E."/>
            <person name="Dante M."/>
            <person name="Pepin K."/>
            <person name="Hillier L.W."/>
            <person name="Nelson J."/>
            <person name="Spieth J."/>
            <person name="Ryan E."/>
            <person name="Andrews S."/>
            <person name="Geisel C."/>
            <person name="Layman D."/>
            <person name="Du H."/>
            <person name="Ali J."/>
            <person name="Berghoff A."/>
            <person name="Jones K."/>
            <person name="Drone K."/>
            <person name="Cotton M."/>
            <person name="Joshu C."/>
            <person name="Antonoiu B."/>
            <person name="Zidanic M."/>
            <person name="Strong C."/>
            <person name="Sun H."/>
            <person name="Lamar B."/>
            <person name="Yordan C."/>
            <person name="Ma P."/>
            <person name="Zhong J."/>
            <person name="Preston R."/>
            <person name="Vil D."/>
            <person name="Shekher M."/>
            <person name="Matero A."/>
            <person name="Shah R."/>
            <person name="Swaby I.K."/>
            <person name="O'Shaughnessy A."/>
            <person name="Rodriguez M."/>
            <person name="Hoffman J."/>
            <person name="Till S."/>
            <person name="Granat S."/>
            <person name="Shohdy N."/>
            <person name="Hasegawa A."/>
            <person name="Hameed A."/>
            <person name="Lodhi M."/>
            <person name="Johnson A."/>
            <person name="Chen E."/>
            <person name="Marra M.A."/>
            <person name="Martienssen R."/>
            <person name="McCombie W.R."/>
        </authorList>
    </citation>
    <scope>NUCLEOTIDE SEQUENCE [LARGE SCALE GENOMIC DNA]</scope>
    <source>
        <strain>cv. Columbia</strain>
    </source>
</reference>
<reference key="2">
    <citation type="journal article" date="2017" name="Plant J.">
        <title>Araport11: a complete reannotation of the Arabidopsis thaliana reference genome.</title>
        <authorList>
            <person name="Cheng C.Y."/>
            <person name="Krishnakumar V."/>
            <person name="Chan A.P."/>
            <person name="Thibaud-Nissen F."/>
            <person name="Schobel S."/>
            <person name="Town C.D."/>
        </authorList>
    </citation>
    <scope>GENOME REANNOTATION</scope>
    <source>
        <strain>cv. Columbia</strain>
    </source>
</reference>
<reference key="3">
    <citation type="submission" date="2006-07" db="EMBL/GenBank/DDBJ databases">
        <title>Large-scale analysis of RIKEN Arabidopsis full-length (RAFL) cDNAs.</title>
        <authorList>
            <person name="Totoki Y."/>
            <person name="Seki M."/>
            <person name="Ishida J."/>
            <person name="Nakajima M."/>
            <person name="Enju A."/>
            <person name="Kamiya A."/>
            <person name="Narusaka M."/>
            <person name="Shin-i T."/>
            <person name="Nakagawa M."/>
            <person name="Sakamoto N."/>
            <person name="Oishi K."/>
            <person name="Kohara Y."/>
            <person name="Kobayashi M."/>
            <person name="Toyoda A."/>
            <person name="Sakaki Y."/>
            <person name="Sakurai T."/>
            <person name="Iida K."/>
            <person name="Akiyama K."/>
            <person name="Satou M."/>
            <person name="Toyoda T."/>
            <person name="Konagaya A."/>
            <person name="Carninci P."/>
            <person name="Kawai J."/>
            <person name="Hayashizaki Y."/>
            <person name="Shinozaki K."/>
        </authorList>
    </citation>
    <scope>NUCLEOTIDE SEQUENCE [LARGE SCALE MRNA] (ISOFORM 2)</scope>
    <source>
        <strain>cv. Columbia</strain>
    </source>
</reference>
<reference key="4">
    <citation type="journal article" date="2004" name="Plant J.">
        <title>Two TIR:NB:LRR genes are required to specify resistance to Peronospora parasitica isolate Cala2 in Arabidopsis.</title>
        <authorList>
            <person name="Sinapidou E."/>
            <person name="Williams K."/>
            <person name="Nott L."/>
            <person name="Bahkt S."/>
            <person name="Toer M."/>
            <person name="Crute I."/>
            <person name="Bittner-Eddy P."/>
            <person name="Beynon J."/>
        </authorList>
    </citation>
    <scope>FUNCTION</scope>
    <scope>MUTAGENESIS OF GLY-121; LEU-726; THR-944 AND GLU-955</scope>
</reference>
<reference key="5">
    <citation type="journal article" date="2012" name="Mol. Cell. Proteomics">
        <title>Comparative large-scale characterisation of plant vs. mammal proteins reveals similar and idiosyncratic N-alpha acetylation features.</title>
        <authorList>
            <person name="Bienvenut W.V."/>
            <person name="Sumpton D."/>
            <person name="Martinez A."/>
            <person name="Lilla S."/>
            <person name="Espagne C."/>
            <person name="Meinnel T."/>
            <person name="Giglione C."/>
        </authorList>
    </citation>
    <scope>IDENTIFICATION BY MASS SPECTROMETRY [LARGE SCALE ANALYSIS]</scope>
</reference>
<gene>
    <name evidence="4" type="primary">RPP2B</name>
    <name evidence="6" type="ordered locus">At4g19510</name>
    <name evidence="7" type="ORF">F24J7.70</name>
</gene>
<dbReference type="EC" id="3.2.2.6" evidence="2"/>
<dbReference type="EMBL" id="AL021768">
    <property type="protein sequence ID" value="CAA16928.1"/>
    <property type="status" value="ALT_SEQ"/>
    <property type="molecule type" value="Genomic_DNA"/>
</dbReference>
<dbReference type="EMBL" id="AL161551">
    <property type="protein sequence ID" value="CAB78953.1"/>
    <property type="status" value="ALT_SEQ"/>
    <property type="molecule type" value="Genomic_DNA"/>
</dbReference>
<dbReference type="EMBL" id="CP002687">
    <property type="protein sequence ID" value="ANM66561.1"/>
    <property type="status" value="ALT_INIT"/>
    <property type="molecule type" value="Genomic_DNA"/>
</dbReference>
<dbReference type="EMBL" id="CP002687">
    <property type="protein sequence ID" value="ANM66562.1"/>
    <property type="status" value="ALT_INIT"/>
    <property type="molecule type" value="Genomic_DNA"/>
</dbReference>
<dbReference type="EMBL" id="CP002687">
    <property type="protein sequence ID" value="ANM66563.1"/>
    <property type="status" value="ALT_INIT"/>
    <property type="molecule type" value="Genomic_DNA"/>
</dbReference>
<dbReference type="EMBL" id="CP002687">
    <property type="protein sequence ID" value="AEE84192.1"/>
    <property type="status" value="ALT_INIT"/>
    <property type="molecule type" value="Genomic_DNA"/>
</dbReference>
<dbReference type="EMBL" id="CP002687">
    <property type="protein sequence ID" value="ANM66560.1"/>
    <property type="status" value="ALT_INIT"/>
    <property type="molecule type" value="Genomic_DNA"/>
</dbReference>
<dbReference type="EMBL" id="AK229040">
    <property type="status" value="NOT_ANNOTATED_CDS"/>
    <property type="molecule type" value="mRNA"/>
</dbReference>
<dbReference type="PIR" id="T06144">
    <property type="entry name" value="T06144"/>
</dbReference>
<dbReference type="RefSeq" id="NP_001328446.1">
    <property type="nucleotide sequence ID" value="NM_001341350.1"/>
</dbReference>
<dbReference type="RefSeq" id="NP_001328447.1">
    <property type="nucleotide sequence ID" value="NM_001341347.1"/>
</dbReference>
<dbReference type="RefSeq" id="NP_001328448.1">
    <property type="nucleotide sequence ID" value="NM_001341346.1"/>
</dbReference>
<dbReference type="RefSeq" id="NP_001328449.1">
    <property type="nucleotide sequence ID" value="NM_001341349.1"/>
</dbReference>
<dbReference type="RefSeq" id="NP_193686.5">
    <property type="nucleotide sequence ID" value="NM_118071.6"/>
</dbReference>
<dbReference type="SMR" id="F4JT80"/>
<dbReference type="STRING" id="3702.F4JT80"/>
<dbReference type="PaxDb" id="3702-AT4G19510.1"/>
<dbReference type="ProMEX" id="F4JT80"/>
<dbReference type="GeneID" id="827692"/>
<dbReference type="KEGG" id="ath:AT4G19510"/>
<dbReference type="Araport" id="AT4G19510"/>
<dbReference type="TAIR" id="AT4G19510"/>
<dbReference type="eggNOG" id="ENOG502SI7S">
    <property type="taxonomic scope" value="Eukaryota"/>
</dbReference>
<dbReference type="HOGENOM" id="CLU_001561_0_3_1"/>
<dbReference type="InParanoid" id="F4JT80"/>
<dbReference type="PRO" id="PR:F4JT80"/>
<dbReference type="Proteomes" id="UP000006548">
    <property type="component" value="Chromosome 4"/>
</dbReference>
<dbReference type="ExpressionAtlas" id="F4JT80">
    <property type="expression patterns" value="baseline and differential"/>
</dbReference>
<dbReference type="GO" id="GO:0043531">
    <property type="term" value="F:ADP binding"/>
    <property type="evidence" value="ECO:0007669"/>
    <property type="project" value="InterPro"/>
</dbReference>
<dbReference type="GO" id="GO:0005524">
    <property type="term" value="F:ATP binding"/>
    <property type="evidence" value="ECO:0007669"/>
    <property type="project" value="UniProtKB-KW"/>
</dbReference>
<dbReference type="GO" id="GO:0061809">
    <property type="term" value="F:NAD+ nucleosidase activity, cyclic ADP-ribose generating"/>
    <property type="evidence" value="ECO:0007669"/>
    <property type="project" value="UniProtKB-EC"/>
</dbReference>
<dbReference type="GO" id="GO:0006952">
    <property type="term" value="P:defense response"/>
    <property type="evidence" value="ECO:0007669"/>
    <property type="project" value="UniProtKB-KW"/>
</dbReference>
<dbReference type="GO" id="GO:0007165">
    <property type="term" value="P:signal transduction"/>
    <property type="evidence" value="ECO:0007669"/>
    <property type="project" value="InterPro"/>
</dbReference>
<dbReference type="FunFam" id="3.40.50.10140:FF:000007">
    <property type="entry name" value="Disease resistance protein (TIR-NBS-LRR class)"/>
    <property type="match status" value="1"/>
</dbReference>
<dbReference type="FunFam" id="3.80.10.10:FF:000386">
    <property type="entry name" value="Disease resistance protein RPS4"/>
    <property type="match status" value="1"/>
</dbReference>
<dbReference type="Gene3D" id="1.10.8.430">
    <property type="entry name" value="Helical domain of apoptotic protease-activating factors"/>
    <property type="match status" value="1"/>
</dbReference>
<dbReference type="Gene3D" id="3.40.50.300">
    <property type="entry name" value="P-loop containing nucleotide triphosphate hydrolases"/>
    <property type="match status" value="1"/>
</dbReference>
<dbReference type="Gene3D" id="3.80.10.10">
    <property type="entry name" value="Ribonuclease Inhibitor"/>
    <property type="match status" value="2"/>
</dbReference>
<dbReference type="Gene3D" id="3.40.50.10140">
    <property type="entry name" value="Toll/interleukin-1 receptor homology (TIR) domain"/>
    <property type="match status" value="1"/>
</dbReference>
<dbReference type="Gene3D" id="1.10.10.10">
    <property type="entry name" value="Winged helix-like DNA-binding domain superfamily/Winged helix DNA-binding domain"/>
    <property type="match status" value="1"/>
</dbReference>
<dbReference type="InterPro" id="IPR042197">
    <property type="entry name" value="Apaf_helical"/>
</dbReference>
<dbReference type="InterPro" id="IPR045344">
    <property type="entry name" value="C-JID"/>
</dbReference>
<dbReference type="InterPro" id="IPR044974">
    <property type="entry name" value="Disease_R_plants"/>
</dbReference>
<dbReference type="InterPro" id="IPR001611">
    <property type="entry name" value="Leu-rich_rpt"/>
</dbReference>
<dbReference type="InterPro" id="IPR011713">
    <property type="entry name" value="Leu-rich_rpt_3"/>
</dbReference>
<dbReference type="InterPro" id="IPR032675">
    <property type="entry name" value="LRR_dom_sf"/>
</dbReference>
<dbReference type="InterPro" id="IPR002182">
    <property type="entry name" value="NB-ARC"/>
</dbReference>
<dbReference type="InterPro" id="IPR027417">
    <property type="entry name" value="P-loop_NTPase"/>
</dbReference>
<dbReference type="InterPro" id="IPR000157">
    <property type="entry name" value="TIR_dom"/>
</dbReference>
<dbReference type="InterPro" id="IPR035897">
    <property type="entry name" value="Toll_tir_struct_dom_sf"/>
</dbReference>
<dbReference type="InterPro" id="IPR036388">
    <property type="entry name" value="WH-like_DNA-bd_sf"/>
</dbReference>
<dbReference type="InterPro" id="IPR036390">
    <property type="entry name" value="WH_DNA-bd_sf"/>
</dbReference>
<dbReference type="PANTHER" id="PTHR11017:SF552">
    <property type="entry name" value="DISEASE RESISTANCE PROTEIN RPP2B"/>
    <property type="match status" value="1"/>
</dbReference>
<dbReference type="PANTHER" id="PTHR11017">
    <property type="entry name" value="LEUCINE-RICH REPEAT-CONTAINING PROTEIN"/>
    <property type="match status" value="1"/>
</dbReference>
<dbReference type="Pfam" id="PF20160">
    <property type="entry name" value="C-JID"/>
    <property type="match status" value="1"/>
</dbReference>
<dbReference type="Pfam" id="PF07725">
    <property type="entry name" value="LRR_3"/>
    <property type="match status" value="1"/>
</dbReference>
<dbReference type="Pfam" id="PF00931">
    <property type="entry name" value="NB-ARC"/>
    <property type="match status" value="1"/>
</dbReference>
<dbReference type="Pfam" id="PF01582">
    <property type="entry name" value="TIR"/>
    <property type="match status" value="1"/>
</dbReference>
<dbReference type="Pfam" id="PF23282">
    <property type="entry name" value="WHD_ROQ1"/>
    <property type="match status" value="1"/>
</dbReference>
<dbReference type="PRINTS" id="PR00364">
    <property type="entry name" value="DISEASERSIST"/>
</dbReference>
<dbReference type="SMART" id="SM00255">
    <property type="entry name" value="TIR"/>
    <property type="match status" value="1"/>
</dbReference>
<dbReference type="SUPFAM" id="SSF52058">
    <property type="entry name" value="L domain-like"/>
    <property type="match status" value="2"/>
</dbReference>
<dbReference type="SUPFAM" id="SSF52540">
    <property type="entry name" value="P-loop containing nucleoside triphosphate hydrolases"/>
    <property type="match status" value="1"/>
</dbReference>
<dbReference type="SUPFAM" id="SSF52200">
    <property type="entry name" value="Toll/Interleukin receptor TIR domain"/>
    <property type="match status" value="1"/>
</dbReference>
<dbReference type="SUPFAM" id="SSF46785">
    <property type="entry name" value="Winged helix' DNA-binding domain"/>
    <property type="match status" value="1"/>
</dbReference>
<dbReference type="PROSITE" id="PS51450">
    <property type="entry name" value="LRR"/>
    <property type="match status" value="5"/>
</dbReference>
<dbReference type="PROSITE" id="PS50104">
    <property type="entry name" value="TIR"/>
    <property type="match status" value="1"/>
</dbReference>
<accession>F4JT80</accession>
<accession>A0A1P8B4Q1</accession>
<accession>O49469</accession>
<name>RPP2B_ARATH</name>
<feature type="chain" id="PRO_0000444557" description="Disease resistance protein RPP2B">
    <location>
        <begin position="1"/>
        <end position="1207"/>
    </location>
</feature>
<feature type="domain" description="TIR" evidence="2">
    <location>
        <begin position="15"/>
        <end position="180"/>
    </location>
</feature>
<feature type="domain" description="NB-ARC" evidence="1">
    <location>
        <begin position="201"/>
        <end position="445"/>
    </location>
</feature>
<feature type="repeat" description="LRR 1" evidence="1">
    <location>
        <begin position="607"/>
        <end position="630"/>
    </location>
</feature>
<feature type="repeat" description="LRR 2" evidence="1">
    <location>
        <begin position="653"/>
        <end position="676"/>
    </location>
</feature>
<feature type="repeat" description="LRR 3" evidence="1">
    <location>
        <begin position="677"/>
        <end position="699"/>
    </location>
</feature>
<feature type="repeat" description="LRR 4" evidence="1">
    <location>
        <begin position="720"/>
        <end position="743"/>
    </location>
</feature>
<feature type="repeat" description="LRR 5" evidence="1">
    <location>
        <begin position="744"/>
        <end position="767"/>
    </location>
</feature>
<feature type="repeat" description="LRR 6" evidence="1">
    <location>
        <begin position="769"/>
        <end position="791"/>
    </location>
</feature>
<feature type="repeat" description="LRR 7" evidence="1">
    <location>
        <begin position="792"/>
        <end position="815"/>
    </location>
</feature>
<feature type="repeat" description="LRR 8" evidence="1">
    <location>
        <begin position="840"/>
        <end position="862"/>
    </location>
</feature>
<feature type="repeat" description="LRR 9" evidence="1">
    <location>
        <begin position="863"/>
        <end position="886"/>
    </location>
</feature>
<feature type="active site" evidence="2">
    <location>
        <position position="89"/>
    </location>
</feature>
<feature type="splice variant" id="VSP_059609" description="In isoform 2.">
    <location>
        <begin position="445"/>
        <end position="481"/>
    </location>
</feature>
<feature type="mutagenesis site" description="Enhanced susceptibility to Hyaloperonospora parasitica." evidence="3">
    <original>G</original>
    <variation>E</variation>
    <location>
        <position position="121"/>
    </location>
</feature>
<feature type="mutagenesis site" description="Enhanced susceptibility to Hyaloperonospora parasitica." evidence="3">
    <original>L</original>
    <variation>F</variation>
    <location>
        <position position="726"/>
    </location>
</feature>
<feature type="mutagenesis site" description="Enhanced susceptibility to Hyaloperonospora parasitica." evidence="3">
    <original>T</original>
    <variation>M</variation>
    <location>
        <position position="944"/>
    </location>
</feature>
<feature type="mutagenesis site" description="Enhanced susceptibility to Hyaloperonospora parasitica." evidence="3">
    <original>E</original>
    <variation>K</variation>
    <location>
        <position position="955"/>
    </location>
</feature>
<sequence length="1207" mass="138314">MAFASSSSSIVLSKCEFDVFVSFRGADTRHDFTSHLVKYLRGKGIDVFSDAKLRGGEYISLLFDRIEQSKMSIVVFSEDYANSWWCLEEVGKIMQRRKEFNHGVLPIFYKVSKSDVSNQTGSFEAVFQSPTKIFNGDEQKIEELKVALKTASNIRGFVYPENSSEPDFLDEIVKNTFRMLNELSPCVIPDDLPGIESRSKELEKLLMFDNDECVRVVGVLGMTGIGKTTVADIVYKQNFQRFDGYEFLEDIEDNSKRYGLPYLYQKLLHKLLDGENVDVRAQGRPENFLRNKKLFIVLDNVTEEKQIEYLIGKKNVYRQGSRIVIITRDKKLLQKNADATYVVPRLNDREAMELFCLQVFGNHYPTEEFVDLSNDFVCYAKGLPLALKLLGKGLLTHDINYWKKKLEFLQVNPDKELQKELKSSYKALDDDQKSVFLDIACFFRSEKADFVSSILKSDDIDAKDVMRELEEKCLVTISYDRIEMHDLLHAMGKEIGKEKSIRKAGERRRLWNHKDIRDILEHNTGTECVRGIFLNMSEVRRIKLFPAAFTMLSKLKFLKFHSSHCSQWCDNDHIFQCSKVPDHFPDELVYLHWQGYPYDCLPSDFDPKELVDLSLRYSHIKQLWEDEKNTESLRWVDLGQSKDLLNLSGLSRAKNLERLDLEGCTSLDLLGSVKQMNELIYLNLRDCTSLESLPKGFKIKSLKTLILSGCLKLKDFHIISESIESLHLEGTAIERVVEHIESLHSLILLNLKNCEKLKYLPNDLYKLKSLQELVLSGCSALESLPPIKEKMECLEILLMDGTSIKQTPEMSCLSNLKICSFCRPVIDDSTGLVVLPFSGNSFLSDLYLTNCNIDKLPDKFSSLRSLRCLCLSRNNIETLPESIEKLYSLLLLDLKHCCRLKSLPLLPSNLQYLDAHGCGSLENVSKPLTIPLVTERMHTTFIFTDCFKLNQAEKEDIVAQAQLKSQLLARTSRHHNHKGLLLDPLVAVCFPGHDIPSWFSHQKMGSLIETDLLPHWCNSKFIGASLCVVVTFKDHEGHHANRLSVRCKSKFKSQNGQFISFSFCLGGWNESCGSSCHEPRKLGSDHVFISYNNCNVPVFKWSEETNEGNRCHPTSASFEFYLTDETERKLECCEILRCGMNFLYARDENDRKFQGIRVTDTVERTSSEALVTIRGQSHSRIEERRYGRIRDEIMDMTGSSMIGGPES</sequence>
<evidence type="ECO:0000255" key="1"/>
<evidence type="ECO:0000255" key="2">
    <source>
        <dbReference type="PROSITE-ProRule" id="PRU00204"/>
    </source>
</evidence>
<evidence type="ECO:0000269" key="3">
    <source>
    </source>
</evidence>
<evidence type="ECO:0000303" key="4">
    <source>
    </source>
</evidence>
<evidence type="ECO:0000305" key="5"/>
<evidence type="ECO:0000312" key="6">
    <source>
        <dbReference type="Araport" id="AT4G19510"/>
    </source>
</evidence>
<evidence type="ECO:0000312" key="7">
    <source>
        <dbReference type="EMBL" id="CAA16928.1"/>
    </source>
</evidence>